<sequence>MDHMKTLVLVVHPNIESSRINKKWKEAVLSEPDVTVHDLYEKYRDQPIDVEFEQQQLLAHDRIVFQFPLYWYSSPPLLKQWFDEVFTFGWAHGPGGNKLKGKEWVTAMSIGSPEHSYQAGGYNLFSISELTKPFQASAHLVGMTYLPSFAEYRANTISDQEIAESANRYVKHITNIELNPKVRLQRYLKQLESVDLT</sequence>
<proteinExistence type="inferred from homology"/>
<evidence type="ECO:0000305" key="1"/>
<gene>
    <name type="primary">ydeQ</name>
    <name type="ordered locus">BSU05300</name>
</gene>
<feature type="chain" id="PRO_0000071633" description="Uncharacterized NAD(P)H oxidoreductase YdeQ">
    <location>
        <begin position="1"/>
        <end position="197"/>
    </location>
</feature>
<accession>P96674</accession>
<keyword id="KW-0560">Oxidoreductase</keyword>
<keyword id="KW-1185">Reference proteome</keyword>
<reference key="1">
    <citation type="submission" date="1997-03" db="EMBL/GenBank/DDBJ databases">
        <title>A 148 kbp sequence of the region between 35 and 47 degree of the Bacillus subtilis genome.</title>
        <authorList>
            <person name="Kasahara Y."/>
            <person name="Nakai S."/>
            <person name="Lee S."/>
            <person name="Sadaie Y."/>
            <person name="Ogasawara N."/>
        </authorList>
    </citation>
    <scope>NUCLEOTIDE SEQUENCE [GENOMIC DNA]</scope>
    <source>
        <strain>168</strain>
    </source>
</reference>
<reference key="2">
    <citation type="journal article" date="1997" name="Nature">
        <title>The complete genome sequence of the Gram-positive bacterium Bacillus subtilis.</title>
        <authorList>
            <person name="Kunst F."/>
            <person name="Ogasawara N."/>
            <person name="Moszer I."/>
            <person name="Albertini A.M."/>
            <person name="Alloni G."/>
            <person name="Azevedo V."/>
            <person name="Bertero M.G."/>
            <person name="Bessieres P."/>
            <person name="Bolotin A."/>
            <person name="Borchert S."/>
            <person name="Borriss R."/>
            <person name="Boursier L."/>
            <person name="Brans A."/>
            <person name="Braun M."/>
            <person name="Brignell S.C."/>
            <person name="Bron S."/>
            <person name="Brouillet S."/>
            <person name="Bruschi C.V."/>
            <person name="Caldwell B."/>
            <person name="Capuano V."/>
            <person name="Carter N.M."/>
            <person name="Choi S.-K."/>
            <person name="Codani J.-J."/>
            <person name="Connerton I.F."/>
            <person name="Cummings N.J."/>
            <person name="Daniel R.A."/>
            <person name="Denizot F."/>
            <person name="Devine K.M."/>
            <person name="Duesterhoeft A."/>
            <person name="Ehrlich S.D."/>
            <person name="Emmerson P.T."/>
            <person name="Entian K.-D."/>
            <person name="Errington J."/>
            <person name="Fabret C."/>
            <person name="Ferrari E."/>
            <person name="Foulger D."/>
            <person name="Fritz C."/>
            <person name="Fujita M."/>
            <person name="Fujita Y."/>
            <person name="Fuma S."/>
            <person name="Galizzi A."/>
            <person name="Galleron N."/>
            <person name="Ghim S.-Y."/>
            <person name="Glaser P."/>
            <person name="Goffeau A."/>
            <person name="Golightly E.J."/>
            <person name="Grandi G."/>
            <person name="Guiseppi G."/>
            <person name="Guy B.J."/>
            <person name="Haga K."/>
            <person name="Haiech J."/>
            <person name="Harwood C.R."/>
            <person name="Henaut A."/>
            <person name="Hilbert H."/>
            <person name="Holsappel S."/>
            <person name="Hosono S."/>
            <person name="Hullo M.-F."/>
            <person name="Itaya M."/>
            <person name="Jones L.-M."/>
            <person name="Joris B."/>
            <person name="Karamata D."/>
            <person name="Kasahara Y."/>
            <person name="Klaerr-Blanchard M."/>
            <person name="Klein C."/>
            <person name="Kobayashi Y."/>
            <person name="Koetter P."/>
            <person name="Koningstein G."/>
            <person name="Krogh S."/>
            <person name="Kumano M."/>
            <person name="Kurita K."/>
            <person name="Lapidus A."/>
            <person name="Lardinois S."/>
            <person name="Lauber J."/>
            <person name="Lazarevic V."/>
            <person name="Lee S.-M."/>
            <person name="Levine A."/>
            <person name="Liu H."/>
            <person name="Masuda S."/>
            <person name="Mauel C."/>
            <person name="Medigue C."/>
            <person name="Medina N."/>
            <person name="Mellado R.P."/>
            <person name="Mizuno M."/>
            <person name="Moestl D."/>
            <person name="Nakai S."/>
            <person name="Noback M."/>
            <person name="Noone D."/>
            <person name="O'Reilly M."/>
            <person name="Ogawa K."/>
            <person name="Ogiwara A."/>
            <person name="Oudega B."/>
            <person name="Park S.-H."/>
            <person name="Parro V."/>
            <person name="Pohl T.M."/>
            <person name="Portetelle D."/>
            <person name="Porwollik S."/>
            <person name="Prescott A.M."/>
            <person name="Presecan E."/>
            <person name="Pujic P."/>
            <person name="Purnelle B."/>
            <person name="Rapoport G."/>
            <person name="Rey M."/>
            <person name="Reynolds S."/>
            <person name="Rieger M."/>
            <person name="Rivolta C."/>
            <person name="Rocha E."/>
            <person name="Roche B."/>
            <person name="Rose M."/>
            <person name="Sadaie Y."/>
            <person name="Sato T."/>
            <person name="Scanlan E."/>
            <person name="Schleich S."/>
            <person name="Schroeter R."/>
            <person name="Scoffone F."/>
            <person name="Sekiguchi J."/>
            <person name="Sekowska A."/>
            <person name="Seror S.J."/>
            <person name="Serror P."/>
            <person name="Shin B.-S."/>
            <person name="Soldo B."/>
            <person name="Sorokin A."/>
            <person name="Tacconi E."/>
            <person name="Takagi T."/>
            <person name="Takahashi H."/>
            <person name="Takemaru K."/>
            <person name="Takeuchi M."/>
            <person name="Tamakoshi A."/>
            <person name="Tanaka T."/>
            <person name="Terpstra P."/>
            <person name="Tognoni A."/>
            <person name="Tosato V."/>
            <person name="Uchiyama S."/>
            <person name="Vandenbol M."/>
            <person name="Vannier F."/>
            <person name="Vassarotti A."/>
            <person name="Viari A."/>
            <person name="Wambutt R."/>
            <person name="Wedler E."/>
            <person name="Wedler H."/>
            <person name="Weitzenegger T."/>
            <person name="Winters P."/>
            <person name="Wipat A."/>
            <person name="Yamamoto H."/>
            <person name="Yamane K."/>
            <person name="Yasumoto K."/>
            <person name="Yata K."/>
            <person name="Yoshida K."/>
            <person name="Yoshikawa H.-F."/>
            <person name="Zumstein E."/>
            <person name="Yoshikawa H."/>
            <person name="Danchin A."/>
        </authorList>
    </citation>
    <scope>NUCLEOTIDE SEQUENCE [LARGE SCALE GENOMIC DNA]</scope>
    <source>
        <strain>168</strain>
    </source>
</reference>
<name>YDEQ_BACSU</name>
<comment type="similarity">
    <text evidence="1">Belongs to the NAD(P)H dehydrogenase (quinone) family.</text>
</comment>
<protein>
    <recommendedName>
        <fullName>Uncharacterized NAD(P)H oxidoreductase YdeQ</fullName>
        <ecNumber>1.6.99.-</ecNumber>
    </recommendedName>
</protein>
<organism>
    <name type="scientific">Bacillus subtilis (strain 168)</name>
    <dbReference type="NCBI Taxonomy" id="224308"/>
    <lineage>
        <taxon>Bacteria</taxon>
        <taxon>Bacillati</taxon>
        <taxon>Bacillota</taxon>
        <taxon>Bacilli</taxon>
        <taxon>Bacillales</taxon>
        <taxon>Bacillaceae</taxon>
        <taxon>Bacillus</taxon>
    </lineage>
</organism>
<dbReference type="EC" id="1.6.99.-"/>
<dbReference type="EMBL" id="AB001488">
    <property type="protein sequence ID" value="BAA19364.1"/>
    <property type="molecule type" value="Genomic_DNA"/>
</dbReference>
<dbReference type="EMBL" id="AL009126">
    <property type="protein sequence ID" value="CAB12337.1"/>
    <property type="molecule type" value="Genomic_DNA"/>
</dbReference>
<dbReference type="PIR" id="C69779">
    <property type="entry name" value="C69779"/>
</dbReference>
<dbReference type="RefSeq" id="NP_388411.1">
    <property type="nucleotide sequence ID" value="NC_000964.3"/>
</dbReference>
<dbReference type="RefSeq" id="WP_009966655.1">
    <property type="nucleotide sequence ID" value="NZ_OZ025638.1"/>
</dbReference>
<dbReference type="SMR" id="P96674"/>
<dbReference type="FunCoup" id="P96674">
    <property type="interactions" value="50"/>
</dbReference>
<dbReference type="STRING" id="224308.BSU05300"/>
<dbReference type="PaxDb" id="224308-BSU05300"/>
<dbReference type="EnsemblBacteria" id="CAB12337">
    <property type="protein sequence ID" value="CAB12337"/>
    <property type="gene ID" value="BSU_05300"/>
</dbReference>
<dbReference type="GeneID" id="939902"/>
<dbReference type="KEGG" id="bsu:BSU05300"/>
<dbReference type="PATRIC" id="fig|224308.43.peg.551"/>
<dbReference type="eggNOG" id="COG2249">
    <property type="taxonomic scope" value="Bacteria"/>
</dbReference>
<dbReference type="InParanoid" id="P96674"/>
<dbReference type="OrthoDB" id="9798454at2"/>
<dbReference type="PhylomeDB" id="P96674"/>
<dbReference type="BioCyc" id="BSUB:BSU05300-MONOMER"/>
<dbReference type="Proteomes" id="UP000001570">
    <property type="component" value="Chromosome"/>
</dbReference>
<dbReference type="GO" id="GO:0009055">
    <property type="term" value="F:electron transfer activity"/>
    <property type="evidence" value="ECO:0000318"/>
    <property type="project" value="GO_Central"/>
</dbReference>
<dbReference type="GO" id="GO:0010181">
    <property type="term" value="F:FMN binding"/>
    <property type="evidence" value="ECO:0000318"/>
    <property type="project" value="GO_Central"/>
</dbReference>
<dbReference type="GO" id="GO:0003955">
    <property type="term" value="F:NAD(P)H dehydrogenase (quinone) activity"/>
    <property type="evidence" value="ECO:0000318"/>
    <property type="project" value="GO_Central"/>
</dbReference>
<dbReference type="FunFam" id="3.40.50.360:FF:000013">
    <property type="entry name" value="Glutathione-regulated potassium-efflux system ancillary protein KefG"/>
    <property type="match status" value="1"/>
</dbReference>
<dbReference type="Gene3D" id="3.40.50.360">
    <property type="match status" value="1"/>
</dbReference>
<dbReference type="InterPro" id="IPR003680">
    <property type="entry name" value="Flavodoxin_fold"/>
</dbReference>
<dbReference type="InterPro" id="IPR029039">
    <property type="entry name" value="Flavoprotein-like_sf"/>
</dbReference>
<dbReference type="InterPro" id="IPR046980">
    <property type="entry name" value="KefG/KefF"/>
</dbReference>
<dbReference type="PANTHER" id="PTHR47307">
    <property type="entry name" value="GLUTATHIONE-REGULATED POTASSIUM-EFFLUX SYSTEM ANCILLARY PROTEIN KEFG"/>
    <property type="match status" value="1"/>
</dbReference>
<dbReference type="PANTHER" id="PTHR47307:SF1">
    <property type="entry name" value="GLUTATHIONE-REGULATED POTASSIUM-EFFLUX SYSTEM ANCILLARY PROTEIN KEFG"/>
    <property type="match status" value="1"/>
</dbReference>
<dbReference type="Pfam" id="PF02525">
    <property type="entry name" value="Flavodoxin_2"/>
    <property type="match status" value="1"/>
</dbReference>
<dbReference type="SUPFAM" id="SSF52218">
    <property type="entry name" value="Flavoproteins"/>
    <property type="match status" value="1"/>
</dbReference>